<keyword id="KW-0325">Glycoprotein</keyword>
<keyword id="KW-0732">Signal</keyword>
<keyword id="KW-0758">Storage protein</keyword>
<name>BSPA_POPDE</name>
<comment type="function">
    <text>May play a role in nitrogen storage.</text>
</comment>
<comment type="subunit">
    <text>Monomer.</text>
</comment>
<comment type="tissue specificity">
    <text>Bark.</text>
</comment>
<comment type="induction">
    <text>By photoperiod. Short days stimulate accumulation, while long days inhibit.</text>
</comment>
<comment type="similarity">
    <text evidence="3">To wound-inducible poplar endochitinases.</text>
</comment>
<comment type="sequence caution" evidence="3">
    <conflict type="erroneous initiation">
        <sequence resource="EMBL-CDS" id="CAA49669"/>
    </conflict>
</comment>
<evidence type="ECO:0000250" key="1"/>
<evidence type="ECO:0000255" key="2"/>
<evidence type="ECO:0000305" key="3"/>
<dbReference type="EMBL" id="X70064">
    <property type="protein sequence ID" value="CAA49669.1"/>
    <property type="status" value="ALT_INIT"/>
    <property type="molecule type" value="Genomic_DNA"/>
</dbReference>
<dbReference type="SMR" id="Q07469"/>
<dbReference type="GlyCosmos" id="Q07469">
    <property type="glycosylation" value="1 site, No reported glycans"/>
</dbReference>
<dbReference type="GO" id="GO:0003824">
    <property type="term" value="F:catalytic activity"/>
    <property type="evidence" value="ECO:0007669"/>
    <property type="project" value="InterPro"/>
</dbReference>
<dbReference type="GO" id="GO:0045735">
    <property type="term" value="F:nutrient reservoir activity"/>
    <property type="evidence" value="ECO:0007669"/>
    <property type="project" value="UniProtKB-KW"/>
</dbReference>
<dbReference type="GO" id="GO:0009116">
    <property type="term" value="P:nucleoside metabolic process"/>
    <property type="evidence" value="ECO:0007669"/>
    <property type="project" value="InterPro"/>
</dbReference>
<dbReference type="Gene3D" id="3.40.50.1580">
    <property type="entry name" value="Nucleoside phosphorylase domain"/>
    <property type="match status" value="1"/>
</dbReference>
<dbReference type="InterPro" id="IPR000845">
    <property type="entry name" value="Nucleoside_phosphorylase_d"/>
</dbReference>
<dbReference type="InterPro" id="IPR035994">
    <property type="entry name" value="Nucleoside_phosphorylase_sf"/>
</dbReference>
<dbReference type="PANTHER" id="PTHR21234:SF45">
    <property type="entry name" value="NUCLEOSIDE PHOSPHORYLASE DOMAIN-CONTAINING PROTEIN"/>
    <property type="match status" value="1"/>
</dbReference>
<dbReference type="PANTHER" id="PTHR21234">
    <property type="entry name" value="PURINE NUCLEOSIDE PHOSPHORYLASE"/>
    <property type="match status" value="1"/>
</dbReference>
<dbReference type="Pfam" id="PF01048">
    <property type="entry name" value="PNP_UDP_1"/>
    <property type="match status" value="1"/>
</dbReference>
<dbReference type="SUPFAM" id="SSF53167">
    <property type="entry name" value="Purine and uridine phosphorylases"/>
    <property type="match status" value="1"/>
</dbReference>
<feature type="signal peptide" evidence="1">
    <location>
        <begin position="1"/>
        <end position="24"/>
    </location>
</feature>
<feature type="chain" id="PRO_0000020833" description="Bark storage protein A">
    <location>
        <begin position="25"/>
        <end position="312"/>
    </location>
</feature>
<feature type="glycosylation site" description="N-linked (GlcNAc...) asparagine" evidence="2">
    <location>
        <position position="70"/>
    </location>
</feature>
<protein>
    <recommendedName>
        <fullName>Bark storage protein A</fullName>
    </recommendedName>
</protein>
<proteinExistence type="evidence at transcript level"/>
<reference key="1">
    <citation type="journal article" date="1993" name="Plant Physiol.">
        <title>Sequence of a poplar bark storage protein gene.</title>
        <authorList>
            <person name="Coleman G.D."/>
            <person name="Chen T.H.H."/>
        </authorList>
    </citation>
    <scope>NUCLEOTIDE SEQUENCE [GENOMIC DNA]</scope>
    <source>
        <tissue>Leaf</tissue>
    </source>
</reference>
<gene>
    <name type="primary">BSPA</name>
</gene>
<sequence length="312" mass="34154">MPQQSMQASLIDPIAEIERSNCKIAHLRLGLVFTSDNNERALQDSGLYSPDSEDSSVDIAGRRFHSGTLNGSSIVYVKTGSPSVNMATTLQILLVRFNIHGVIYFGNAGSLDKKTMVPGDVSVPQAVAFTGVWNWKKFGSEKGKLVFGDFNYPENGENLLGTVEYEKIKMFSPSEAPKEVFWLPITKSWYNAATEALKDMKLRKCYSDECLPGKPKVVFGSKSSTSDFYVRNKAYGDFLNDNFDAKTADTASASVALTSLSNEKLFVVFQGVSNVAGETSSNSRVSYLASYNAFLAATKFINSIPTPRLACE</sequence>
<accession>Q07469</accession>
<organism>
    <name type="scientific">Populus deltoides</name>
    <name type="common">Eastern poplar</name>
    <name type="synonym">Eastern cottonwood</name>
    <dbReference type="NCBI Taxonomy" id="3696"/>
    <lineage>
        <taxon>Eukaryota</taxon>
        <taxon>Viridiplantae</taxon>
        <taxon>Streptophyta</taxon>
        <taxon>Embryophyta</taxon>
        <taxon>Tracheophyta</taxon>
        <taxon>Spermatophyta</taxon>
        <taxon>Magnoliopsida</taxon>
        <taxon>eudicotyledons</taxon>
        <taxon>Gunneridae</taxon>
        <taxon>Pentapetalae</taxon>
        <taxon>rosids</taxon>
        <taxon>fabids</taxon>
        <taxon>Malpighiales</taxon>
        <taxon>Salicaceae</taxon>
        <taxon>Saliceae</taxon>
        <taxon>Populus</taxon>
    </lineage>
</organism>